<proteinExistence type="inferred from homology"/>
<gene>
    <name evidence="1" type="primary">dsrB</name>
    <name type="ordered locus">YPTB2413</name>
</gene>
<protein>
    <recommendedName>
        <fullName evidence="1">Protein DsrB</fullName>
    </recommendedName>
</protein>
<reference key="1">
    <citation type="journal article" date="2004" name="Proc. Natl. Acad. Sci. U.S.A.">
        <title>Insights into the evolution of Yersinia pestis through whole-genome comparison with Yersinia pseudotuberculosis.</title>
        <authorList>
            <person name="Chain P.S.G."/>
            <person name="Carniel E."/>
            <person name="Larimer F.W."/>
            <person name="Lamerdin J."/>
            <person name="Stoutland P.O."/>
            <person name="Regala W.M."/>
            <person name="Georgescu A.M."/>
            <person name="Vergez L.M."/>
            <person name="Land M.L."/>
            <person name="Motin V.L."/>
            <person name="Brubaker R.R."/>
            <person name="Fowler J."/>
            <person name="Hinnebusch J."/>
            <person name="Marceau M."/>
            <person name="Medigue C."/>
            <person name="Simonet M."/>
            <person name="Chenal-Francisque V."/>
            <person name="Souza B."/>
            <person name="Dacheux D."/>
            <person name="Elliott J.M."/>
            <person name="Derbise A."/>
            <person name="Hauser L.J."/>
            <person name="Garcia E."/>
        </authorList>
    </citation>
    <scope>NUCLEOTIDE SEQUENCE [LARGE SCALE GENOMIC DNA]</scope>
    <source>
        <strain>IP32953</strain>
    </source>
</reference>
<accession>Q669S1</accession>
<dbReference type="EMBL" id="BX936398">
    <property type="protein sequence ID" value="CAH21651.1"/>
    <property type="molecule type" value="Genomic_DNA"/>
</dbReference>
<dbReference type="RefSeq" id="WP_002210892.1">
    <property type="nucleotide sequence ID" value="NZ_CP009712.1"/>
</dbReference>
<dbReference type="SMR" id="Q669S1"/>
<dbReference type="GeneID" id="96666536"/>
<dbReference type="KEGG" id="ypo:BZ17_39"/>
<dbReference type="KEGG" id="yps:YPTB2413"/>
<dbReference type="PATRIC" id="fig|273123.14.peg.42"/>
<dbReference type="Proteomes" id="UP000001011">
    <property type="component" value="Chromosome"/>
</dbReference>
<dbReference type="HAMAP" id="MF_01549">
    <property type="entry name" value="DsrB"/>
    <property type="match status" value="1"/>
</dbReference>
<dbReference type="InterPro" id="IPR019717">
    <property type="entry name" value="Dextransucrase_DSRB"/>
</dbReference>
<dbReference type="NCBIfam" id="NF007981">
    <property type="entry name" value="PRK10708.1"/>
    <property type="match status" value="1"/>
</dbReference>
<dbReference type="Pfam" id="PF10781">
    <property type="entry name" value="DSRB"/>
    <property type="match status" value="1"/>
</dbReference>
<organism>
    <name type="scientific">Yersinia pseudotuberculosis serotype I (strain IP32953)</name>
    <dbReference type="NCBI Taxonomy" id="273123"/>
    <lineage>
        <taxon>Bacteria</taxon>
        <taxon>Pseudomonadati</taxon>
        <taxon>Pseudomonadota</taxon>
        <taxon>Gammaproteobacteria</taxon>
        <taxon>Enterobacterales</taxon>
        <taxon>Yersiniaceae</taxon>
        <taxon>Yersinia</taxon>
    </lineage>
</organism>
<sequence length="63" mass="7041">MKVNDRVTVKTDGGPRREGVVLEVEEFSEGVMYLVSLADYPAGVWFFNEVDSQDGTFVEPLSQ</sequence>
<evidence type="ECO:0000255" key="1">
    <source>
        <dbReference type="HAMAP-Rule" id="MF_01549"/>
    </source>
</evidence>
<feature type="chain" id="PRO_0000201916" description="Protein DsrB">
    <location>
        <begin position="1"/>
        <end position="63"/>
    </location>
</feature>
<comment type="similarity">
    <text evidence="1">Belongs to the DsrB family.</text>
</comment>
<name>DSRB_YERPS</name>